<name>RNFG_PSEAB</name>
<keyword id="KW-0997">Cell inner membrane</keyword>
<keyword id="KW-1003">Cell membrane</keyword>
<keyword id="KW-0249">Electron transport</keyword>
<keyword id="KW-0285">Flavoprotein</keyword>
<keyword id="KW-0288">FMN</keyword>
<keyword id="KW-0472">Membrane</keyword>
<keyword id="KW-0597">Phosphoprotein</keyword>
<keyword id="KW-1278">Translocase</keyword>
<keyword id="KW-0812">Transmembrane</keyword>
<keyword id="KW-1133">Transmembrane helix</keyword>
<keyword id="KW-0813">Transport</keyword>
<feature type="chain" id="PRO_1000014124" description="Ion-translocating oxidoreductase complex subunit G">
    <location>
        <begin position="1"/>
        <end position="214"/>
    </location>
</feature>
<feature type="transmembrane region" description="Helical" evidence="1">
    <location>
        <begin position="13"/>
        <end position="33"/>
    </location>
</feature>
<feature type="modified residue" description="FMN phosphoryl threonine" evidence="1">
    <location>
        <position position="180"/>
    </location>
</feature>
<organism>
    <name type="scientific">Pseudomonas aeruginosa (strain UCBPP-PA14)</name>
    <dbReference type="NCBI Taxonomy" id="208963"/>
    <lineage>
        <taxon>Bacteria</taxon>
        <taxon>Pseudomonadati</taxon>
        <taxon>Pseudomonadota</taxon>
        <taxon>Gammaproteobacteria</taxon>
        <taxon>Pseudomonadales</taxon>
        <taxon>Pseudomonadaceae</taxon>
        <taxon>Pseudomonas</taxon>
    </lineage>
</organism>
<reference key="1">
    <citation type="journal article" date="2006" name="Genome Biol.">
        <title>Genomic analysis reveals that Pseudomonas aeruginosa virulence is combinatorial.</title>
        <authorList>
            <person name="Lee D.G."/>
            <person name="Urbach J.M."/>
            <person name="Wu G."/>
            <person name="Liberati N.T."/>
            <person name="Feinbaum R.L."/>
            <person name="Miyata S."/>
            <person name="Diggins L.T."/>
            <person name="He J."/>
            <person name="Saucier M."/>
            <person name="Deziel E."/>
            <person name="Friedman L."/>
            <person name="Li L."/>
            <person name="Grills G."/>
            <person name="Montgomery K."/>
            <person name="Kucherlapati R."/>
            <person name="Rahme L.G."/>
            <person name="Ausubel F.M."/>
        </authorList>
    </citation>
    <scope>NUCLEOTIDE SEQUENCE [LARGE SCALE GENOMIC DNA]</scope>
    <source>
        <strain>UCBPP-PA14</strain>
    </source>
</reference>
<dbReference type="EC" id="7.-.-.-" evidence="1"/>
<dbReference type="EMBL" id="CP000438">
    <property type="protein sequence ID" value="ABJ12746.1"/>
    <property type="molecule type" value="Genomic_DNA"/>
</dbReference>
<dbReference type="SMR" id="Q02QY2"/>
<dbReference type="KEGG" id="pau:PA14_18900"/>
<dbReference type="PseudoCAP" id="PA14_18900"/>
<dbReference type="HOGENOM" id="CLU_077882_1_0_6"/>
<dbReference type="BioCyc" id="PAER208963:G1G74-1558-MONOMER"/>
<dbReference type="Proteomes" id="UP000000653">
    <property type="component" value="Chromosome"/>
</dbReference>
<dbReference type="GO" id="GO:0005886">
    <property type="term" value="C:plasma membrane"/>
    <property type="evidence" value="ECO:0007669"/>
    <property type="project" value="UniProtKB-SubCell"/>
</dbReference>
<dbReference type="GO" id="GO:0009055">
    <property type="term" value="F:electron transfer activity"/>
    <property type="evidence" value="ECO:0007669"/>
    <property type="project" value="InterPro"/>
</dbReference>
<dbReference type="GO" id="GO:0010181">
    <property type="term" value="F:FMN binding"/>
    <property type="evidence" value="ECO:0007669"/>
    <property type="project" value="InterPro"/>
</dbReference>
<dbReference type="GO" id="GO:0022900">
    <property type="term" value="P:electron transport chain"/>
    <property type="evidence" value="ECO:0007669"/>
    <property type="project" value="UniProtKB-UniRule"/>
</dbReference>
<dbReference type="HAMAP" id="MF_00479">
    <property type="entry name" value="RsxG_RnfG"/>
    <property type="match status" value="1"/>
</dbReference>
<dbReference type="InterPro" id="IPR007329">
    <property type="entry name" value="FMN-bd"/>
</dbReference>
<dbReference type="InterPro" id="IPR010209">
    <property type="entry name" value="Ion_transpt_RnfG/RsxG"/>
</dbReference>
<dbReference type="NCBIfam" id="NF002519">
    <property type="entry name" value="PRK01908.1"/>
    <property type="match status" value="1"/>
</dbReference>
<dbReference type="NCBIfam" id="TIGR01947">
    <property type="entry name" value="rnfG"/>
    <property type="match status" value="1"/>
</dbReference>
<dbReference type="PANTHER" id="PTHR36118">
    <property type="entry name" value="ION-TRANSLOCATING OXIDOREDUCTASE COMPLEX SUBUNIT G"/>
    <property type="match status" value="1"/>
</dbReference>
<dbReference type="PANTHER" id="PTHR36118:SF1">
    <property type="entry name" value="ION-TRANSLOCATING OXIDOREDUCTASE COMPLEX SUBUNIT G"/>
    <property type="match status" value="1"/>
</dbReference>
<dbReference type="Pfam" id="PF04205">
    <property type="entry name" value="FMN_bind"/>
    <property type="match status" value="1"/>
</dbReference>
<dbReference type="PIRSF" id="PIRSF006091">
    <property type="entry name" value="E_trnsport_RnfG"/>
    <property type="match status" value="1"/>
</dbReference>
<dbReference type="SMART" id="SM00900">
    <property type="entry name" value="FMN_bind"/>
    <property type="match status" value="1"/>
</dbReference>
<proteinExistence type="inferred from homology"/>
<sequence>MDAATRRSMLRNALLLGLFALVGVGLVALVQQFTEARIAEAQREARGRALLELLPPGSYDNHPLDSQVPTFAPKLLGLDAPRPAYVARLHGQASAVILQASAPDGYSGAIQLLVGVTAQGRLLGVRVVAHKETPGLGDRIELAKSPWVHGFDGKSLGDPADAGWAVKKDGGTFDQFAGATVTPRAVVRAVHKALRYFDANRERLLAPEEAAGHE</sequence>
<comment type="function">
    <text evidence="1">Part of a membrane-bound complex that couples electron transfer with translocation of ions across the membrane.</text>
</comment>
<comment type="cofactor">
    <cofactor evidence="1">
        <name>FMN</name>
        <dbReference type="ChEBI" id="CHEBI:58210"/>
    </cofactor>
</comment>
<comment type="subunit">
    <text evidence="1">The complex is composed of six subunits: RnfA, RnfB, RnfC, RnfD, RnfE and RnfG.</text>
</comment>
<comment type="subcellular location">
    <subcellularLocation>
        <location evidence="1">Cell inner membrane</location>
        <topology evidence="1">Single-pass membrane protein</topology>
    </subcellularLocation>
</comment>
<comment type="similarity">
    <text evidence="1">Belongs to the RnfG family.</text>
</comment>
<evidence type="ECO:0000255" key="1">
    <source>
        <dbReference type="HAMAP-Rule" id="MF_00479"/>
    </source>
</evidence>
<protein>
    <recommendedName>
        <fullName evidence="1">Ion-translocating oxidoreductase complex subunit G</fullName>
        <ecNumber evidence="1">7.-.-.-</ecNumber>
    </recommendedName>
    <alternativeName>
        <fullName evidence="1">Rnf electron transport complex subunit G</fullName>
    </alternativeName>
</protein>
<gene>
    <name evidence="1" type="primary">rnfG</name>
    <name type="ordered locus">PA14_18900</name>
</gene>
<accession>Q02QY2</accession>